<name>PA2A6_NAJSG</name>
<keyword id="KW-0002">3D-structure</keyword>
<keyword id="KW-0106">Calcium</keyword>
<keyword id="KW-1015">Disulfide bond</keyword>
<keyword id="KW-0378">Hydrolase</keyword>
<keyword id="KW-0442">Lipid degradation</keyword>
<keyword id="KW-0443">Lipid metabolism</keyword>
<keyword id="KW-0479">Metal-binding</keyword>
<keyword id="KW-0964">Secreted</keyword>
<keyword id="KW-0732">Signal</keyword>
<keyword id="KW-0862">Zinc</keyword>
<dbReference type="EC" id="3.1.1.4"/>
<dbReference type="EMBL" id="AY862400">
    <property type="protein sequence ID" value="AAW65726.1"/>
    <property type="molecule type" value="mRNA"/>
</dbReference>
<dbReference type="PDB" id="1Y75">
    <property type="method" value="X-ray"/>
    <property type="resolution" value="2.30 A"/>
    <property type="chains" value="B=8-125"/>
</dbReference>
<dbReference type="PDBsum" id="1Y75"/>
<dbReference type="SMR" id="Q5G290"/>
<dbReference type="EvolutionaryTrace" id="Q5G290"/>
<dbReference type="GO" id="GO:0005576">
    <property type="term" value="C:extracellular region"/>
    <property type="evidence" value="ECO:0007669"/>
    <property type="project" value="UniProtKB-SubCell"/>
</dbReference>
<dbReference type="GO" id="GO:0005509">
    <property type="term" value="F:calcium ion binding"/>
    <property type="evidence" value="ECO:0007669"/>
    <property type="project" value="InterPro"/>
</dbReference>
<dbReference type="GO" id="GO:0047498">
    <property type="term" value="F:calcium-dependent phospholipase A2 activity"/>
    <property type="evidence" value="ECO:0007669"/>
    <property type="project" value="TreeGrafter"/>
</dbReference>
<dbReference type="GO" id="GO:0005543">
    <property type="term" value="F:phospholipid binding"/>
    <property type="evidence" value="ECO:0007669"/>
    <property type="project" value="TreeGrafter"/>
</dbReference>
<dbReference type="GO" id="GO:0050482">
    <property type="term" value="P:arachidonate secretion"/>
    <property type="evidence" value="ECO:0007669"/>
    <property type="project" value="InterPro"/>
</dbReference>
<dbReference type="GO" id="GO:0016042">
    <property type="term" value="P:lipid catabolic process"/>
    <property type="evidence" value="ECO:0007669"/>
    <property type="project" value="UniProtKB-KW"/>
</dbReference>
<dbReference type="GO" id="GO:0006644">
    <property type="term" value="P:phospholipid metabolic process"/>
    <property type="evidence" value="ECO:0007669"/>
    <property type="project" value="InterPro"/>
</dbReference>
<dbReference type="CDD" id="cd00125">
    <property type="entry name" value="PLA2c"/>
    <property type="match status" value="1"/>
</dbReference>
<dbReference type="FunFam" id="1.20.90.10:FF:000007">
    <property type="entry name" value="Acidic phospholipase A2"/>
    <property type="match status" value="1"/>
</dbReference>
<dbReference type="Gene3D" id="1.20.90.10">
    <property type="entry name" value="Phospholipase A2 domain"/>
    <property type="match status" value="1"/>
</dbReference>
<dbReference type="InterPro" id="IPR001211">
    <property type="entry name" value="PLipase_A2"/>
</dbReference>
<dbReference type="InterPro" id="IPR033112">
    <property type="entry name" value="PLipase_A2_Asp_AS"/>
</dbReference>
<dbReference type="InterPro" id="IPR016090">
    <property type="entry name" value="PLipase_A2_dom"/>
</dbReference>
<dbReference type="InterPro" id="IPR036444">
    <property type="entry name" value="PLipase_A2_dom_sf"/>
</dbReference>
<dbReference type="InterPro" id="IPR033113">
    <property type="entry name" value="PLipase_A2_His_AS"/>
</dbReference>
<dbReference type="PANTHER" id="PTHR11716:SF100">
    <property type="entry name" value="PHOSPHOLIPASE A2"/>
    <property type="match status" value="1"/>
</dbReference>
<dbReference type="PANTHER" id="PTHR11716">
    <property type="entry name" value="PHOSPHOLIPASE A2 FAMILY MEMBER"/>
    <property type="match status" value="1"/>
</dbReference>
<dbReference type="Pfam" id="PF00068">
    <property type="entry name" value="Phospholip_A2_1"/>
    <property type="match status" value="1"/>
</dbReference>
<dbReference type="PRINTS" id="PR00389">
    <property type="entry name" value="PHPHLIPASEA2"/>
</dbReference>
<dbReference type="SMART" id="SM00085">
    <property type="entry name" value="PA2c"/>
    <property type="match status" value="1"/>
</dbReference>
<dbReference type="SUPFAM" id="SSF48619">
    <property type="entry name" value="Phospholipase A2, PLA2"/>
    <property type="match status" value="1"/>
</dbReference>
<dbReference type="PROSITE" id="PS00119">
    <property type="entry name" value="PA2_ASP"/>
    <property type="match status" value="1"/>
</dbReference>
<dbReference type="PROSITE" id="PS00118">
    <property type="entry name" value="PA2_HIS"/>
    <property type="match status" value="1"/>
</dbReference>
<sequence>SNRPMPLNIKQFNNMIQCTVPARSWWDFADYGCYCGSGSGSPVDDLDRCCQVHDNCYNAGGGVTGCAPKSKTYTYECSQGTLTCSGENSACAATVCDCDRLAAICFAGAPYNDNNYNIDLKSRCQ</sequence>
<protein>
    <recommendedName>
        <fullName>Acidic phospholipase A2 6</fullName>
        <shortName>svPLA2</shortName>
        <ecNumber>3.1.1.4</ecNumber>
    </recommendedName>
    <alternativeName>
        <fullName>Phosphatidylcholine 2-acylhydrolase</fullName>
    </alternativeName>
    <alternativeName>
        <fullName>Phospholipase A2 molecule B</fullName>
    </alternativeName>
</protein>
<feature type="signal peptide" evidence="3">
    <location>
        <begin position="1" status="less than"/>
        <end position="1"/>
    </location>
</feature>
<feature type="propeptide" id="PRO_0000346753" evidence="1">
    <location>
        <begin position="2"/>
        <end position="7"/>
    </location>
</feature>
<feature type="chain" id="PRO_5000094847" description="Acidic phospholipase A2 6">
    <location>
        <begin position="8"/>
        <end position="125"/>
    </location>
</feature>
<feature type="active site" evidence="2">
    <location>
        <position position="53"/>
    </location>
</feature>
<feature type="active site" evidence="2">
    <location>
        <position position="99"/>
    </location>
</feature>
<feature type="binding site" evidence="6 8">
    <location>
        <position position="30"/>
    </location>
    <ligand>
        <name>Zn(2+)</name>
        <dbReference type="ChEBI" id="CHEBI:29105"/>
        <note>ligand shared between dimeric partners</note>
    </ligand>
</feature>
<feature type="binding site" evidence="2">
    <location>
        <position position="34"/>
    </location>
    <ligand>
        <name>Ca(2+)</name>
        <dbReference type="ChEBI" id="CHEBI:29108"/>
    </ligand>
</feature>
<feature type="binding site" evidence="2">
    <location>
        <position position="36"/>
    </location>
    <ligand>
        <name>Ca(2+)</name>
        <dbReference type="ChEBI" id="CHEBI:29108"/>
    </ligand>
</feature>
<feature type="binding site" evidence="2">
    <location>
        <position position="54"/>
    </location>
    <ligand>
        <name>Ca(2+)</name>
        <dbReference type="ChEBI" id="CHEBI:29108"/>
    </ligand>
</feature>
<feature type="disulfide bond" evidence="6 8">
    <location>
        <begin position="18"/>
        <end position="77"/>
    </location>
</feature>
<feature type="disulfide bond" evidence="6 8">
    <location>
        <begin position="33"/>
        <end position="124"/>
    </location>
</feature>
<feature type="disulfide bond" evidence="6 8">
    <location>
        <begin position="35"/>
        <end position="50"/>
    </location>
</feature>
<feature type="disulfide bond" evidence="6 8">
    <location>
        <begin position="49"/>
        <end position="105"/>
    </location>
</feature>
<feature type="disulfide bond" evidence="6 8">
    <location>
        <begin position="56"/>
        <end position="98"/>
    </location>
</feature>
<feature type="disulfide bond" evidence="6 8">
    <location>
        <begin position="66"/>
        <end position="91"/>
    </location>
</feature>
<feature type="disulfide bond" evidence="6 8">
    <location>
        <begin position="84"/>
        <end position="96"/>
    </location>
</feature>
<feature type="non-terminal residue">
    <location>
        <position position="1"/>
    </location>
</feature>
<feature type="helix" evidence="9">
    <location>
        <begin position="9"/>
        <end position="19"/>
    </location>
</feature>
<feature type="helix" evidence="9">
    <location>
        <begin position="26"/>
        <end position="29"/>
    </location>
</feature>
<feature type="turn" evidence="9">
    <location>
        <begin position="32"/>
        <end position="34"/>
    </location>
</feature>
<feature type="helix" evidence="9">
    <location>
        <begin position="45"/>
        <end position="60"/>
    </location>
</feature>
<feature type="turn" evidence="9">
    <location>
        <begin position="68"/>
        <end position="70"/>
    </location>
</feature>
<feature type="strand" evidence="9">
    <location>
        <begin position="75"/>
        <end position="78"/>
    </location>
</feature>
<feature type="strand" evidence="9">
    <location>
        <begin position="81"/>
        <end position="84"/>
    </location>
</feature>
<feature type="helix" evidence="9">
    <location>
        <begin position="90"/>
        <end position="108"/>
    </location>
</feature>
<feature type="helix" evidence="9">
    <location>
        <begin position="113"/>
        <end position="115"/>
    </location>
</feature>
<feature type="helix" evidence="9">
    <location>
        <begin position="120"/>
        <end position="123"/>
    </location>
</feature>
<accession>Q5G290</accession>
<evidence type="ECO:0000250" key="1"/>
<evidence type="ECO:0000250" key="2">
    <source>
        <dbReference type="UniProtKB" id="Q6T179"/>
    </source>
</evidence>
<evidence type="ECO:0000255" key="3"/>
<evidence type="ECO:0000255" key="4">
    <source>
        <dbReference type="PROSITE-ProRule" id="PRU10035"/>
    </source>
</evidence>
<evidence type="ECO:0000255" key="5">
    <source>
        <dbReference type="PROSITE-ProRule" id="PRU10036"/>
    </source>
</evidence>
<evidence type="ECO:0000269" key="6">
    <source>
    </source>
</evidence>
<evidence type="ECO:0000305" key="7"/>
<evidence type="ECO:0007744" key="8">
    <source>
        <dbReference type="PDB" id="1Y75"/>
    </source>
</evidence>
<evidence type="ECO:0007829" key="9">
    <source>
        <dbReference type="PDB" id="1Y75"/>
    </source>
</evidence>
<proteinExistence type="evidence at protein level"/>
<reference key="1">
    <citation type="journal article" date="2006" name="Proteins">
        <title>Crystal structure of a heterodimer of phospholipase A2 from Naja naja sagittifera at 2.3 A resolution reveals the presence of a new PLA2-like protein with a novel Cys 32-Cys 49 disulphide bridge with a bound sugar at the substrate-binding site.</title>
        <authorList>
            <person name="Jabeen T."/>
            <person name="Singh N."/>
            <person name="Singh R.K."/>
            <person name="Jasti J."/>
            <person name="Sharma S."/>
            <person name="Kaur P."/>
            <person name="Srinivasan A."/>
            <person name="Singh T.P."/>
        </authorList>
    </citation>
    <scope>NUCLEOTIDE SEQUENCE [MRNA]</scope>
    <scope>X-RAY CRYSTALLOGRAPHY (2.3 ANGSTROMS) OF 8-125</scope>
    <scope>MASS SPECTROMETRY</scope>
    <scope>SUBUNIT</scope>
    <scope>DISULFIDE BONDS</scope>
    <source>
        <tissue>Venom</tissue>
        <tissue>Venom gland</tissue>
    </source>
</reference>
<organism>
    <name type="scientific">Naja sagittifera</name>
    <name type="common">Andaman cobra</name>
    <dbReference type="NCBI Taxonomy" id="195058"/>
    <lineage>
        <taxon>Eukaryota</taxon>
        <taxon>Metazoa</taxon>
        <taxon>Chordata</taxon>
        <taxon>Craniata</taxon>
        <taxon>Vertebrata</taxon>
        <taxon>Euteleostomi</taxon>
        <taxon>Lepidosauria</taxon>
        <taxon>Squamata</taxon>
        <taxon>Bifurcata</taxon>
        <taxon>Unidentata</taxon>
        <taxon>Episquamata</taxon>
        <taxon>Toxicofera</taxon>
        <taxon>Serpentes</taxon>
        <taxon>Colubroidea</taxon>
        <taxon>Elapidae</taxon>
        <taxon>Elapinae</taxon>
        <taxon>Naja</taxon>
    </lineage>
</organism>
<comment type="function">
    <text evidence="1">PLA2 catalyzes the calcium-dependent hydrolysis of the 2-acyl groups in 3-sn-phosphoglycerides.</text>
</comment>
<comment type="catalytic activity">
    <reaction evidence="4 5">
        <text>a 1,2-diacyl-sn-glycero-3-phosphocholine + H2O = a 1-acyl-sn-glycero-3-phosphocholine + a fatty acid + H(+)</text>
        <dbReference type="Rhea" id="RHEA:15801"/>
        <dbReference type="ChEBI" id="CHEBI:15377"/>
        <dbReference type="ChEBI" id="CHEBI:15378"/>
        <dbReference type="ChEBI" id="CHEBI:28868"/>
        <dbReference type="ChEBI" id="CHEBI:57643"/>
        <dbReference type="ChEBI" id="CHEBI:58168"/>
        <dbReference type="EC" id="3.1.1.4"/>
    </reaction>
</comment>
<comment type="cofactor">
    <cofactor evidence="2">
        <name>Ca(2+)</name>
        <dbReference type="ChEBI" id="CHEBI:29108"/>
    </cofactor>
    <text evidence="2">Binds 1 Ca(2+) ion.</text>
</comment>
<comment type="subunit">
    <text evidence="6">Heterodimer formed between isoform 5 and isoform 6 in presence of zinc ion and monomer in absence of zinc ion.</text>
</comment>
<comment type="subcellular location">
    <subcellularLocation>
        <location>Secreted</location>
    </subcellularLocation>
</comment>
<comment type="tissue specificity">
    <text>Expressed by the venom gland.</text>
</comment>
<comment type="mass spectrometry"/>
<comment type="similarity">
    <text evidence="7">Belongs to the phospholipase A2 family. Group I subfamily. D49 sub-subfamily.</text>
</comment>